<reference key="1">
    <citation type="submission" date="2007-02" db="EMBL/GenBank/DDBJ databases">
        <title>Complete sequence of chromosome of Shewanella baltica OS155.</title>
        <authorList>
            <consortium name="US DOE Joint Genome Institute"/>
            <person name="Copeland A."/>
            <person name="Lucas S."/>
            <person name="Lapidus A."/>
            <person name="Barry K."/>
            <person name="Detter J.C."/>
            <person name="Glavina del Rio T."/>
            <person name="Hammon N."/>
            <person name="Israni S."/>
            <person name="Dalin E."/>
            <person name="Tice H."/>
            <person name="Pitluck S."/>
            <person name="Sims D.R."/>
            <person name="Brettin T."/>
            <person name="Bruce D."/>
            <person name="Han C."/>
            <person name="Tapia R."/>
            <person name="Brainard J."/>
            <person name="Schmutz J."/>
            <person name="Larimer F."/>
            <person name="Land M."/>
            <person name="Hauser L."/>
            <person name="Kyrpides N."/>
            <person name="Mikhailova N."/>
            <person name="Brettar I."/>
            <person name="Klappenbach J."/>
            <person name="Konstantinidis K."/>
            <person name="Rodrigues J."/>
            <person name="Tiedje J."/>
            <person name="Richardson P."/>
        </authorList>
    </citation>
    <scope>NUCLEOTIDE SEQUENCE [LARGE SCALE GENOMIC DNA]</scope>
    <source>
        <strain>OS155 / ATCC BAA-1091</strain>
    </source>
</reference>
<organism>
    <name type="scientific">Shewanella baltica (strain OS155 / ATCC BAA-1091)</name>
    <dbReference type="NCBI Taxonomy" id="325240"/>
    <lineage>
        <taxon>Bacteria</taxon>
        <taxon>Pseudomonadati</taxon>
        <taxon>Pseudomonadota</taxon>
        <taxon>Gammaproteobacteria</taxon>
        <taxon>Alteromonadales</taxon>
        <taxon>Shewanellaceae</taxon>
        <taxon>Shewanella</taxon>
    </lineage>
</organism>
<gene>
    <name evidence="1" type="primary">sucC</name>
    <name type="ordered locus">Sbal_2513</name>
</gene>
<proteinExistence type="inferred from homology"/>
<sequence>MNLHEYQAKSLFAEYGLPVSEGFACDTAQEAVEAAGHIGGNLWVVKCQVHAGGRGKAGGVKVTGDKEEIRAFAEHWLGKNLVTYQTDEKGQPVAKILVESCTDIANELYLGAVVDRATRRVVFMASTEGGVEIEKVAEETPELIHTAIIDPLTGPQGYQARDLGFKLGLNPTQMKQFTKIFMGLATMFVDHDFALLEINPLVITTEGNLHCLDGKIGIDGNALYRQPKIKGMHDPSQDDAREAHAAKFELNYVALDGNVGCMVNGAGLAMGTMDIVNLHGGKPANFLDVGGGATKERVAEAFKIILSDSNVKAVLVNIFGGIVRCDMIAEGIIGAVKEVGVKVPVVVRLEGTNAELGREVLAKSGLDIIAATSLTDAAEQVVKAAEGK</sequence>
<accession>A3D5J3</accession>
<protein>
    <recommendedName>
        <fullName evidence="1">Succinate--CoA ligase [ADP-forming] subunit beta</fullName>
        <ecNumber evidence="1">6.2.1.5</ecNumber>
    </recommendedName>
    <alternativeName>
        <fullName evidence="1">Succinyl-CoA synthetase subunit beta</fullName>
        <shortName evidence="1">SCS-beta</shortName>
    </alternativeName>
</protein>
<keyword id="KW-0067">ATP-binding</keyword>
<keyword id="KW-0436">Ligase</keyword>
<keyword id="KW-0460">Magnesium</keyword>
<keyword id="KW-0479">Metal-binding</keyword>
<keyword id="KW-0547">Nucleotide-binding</keyword>
<keyword id="KW-1185">Reference proteome</keyword>
<keyword id="KW-0816">Tricarboxylic acid cycle</keyword>
<evidence type="ECO:0000255" key="1">
    <source>
        <dbReference type="HAMAP-Rule" id="MF_00558"/>
    </source>
</evidence>
<feature type="chain" id="PRO_1000082218" description="Succinate--CoA ligase [ADP-forming] subunit beta">
    <location>
        <begin position="1"/>
        <end position="388"/>
    </location>
</feature>
<feature type="domain" description="ATP-grasp" evidence="1">
    <location>
        <begin position="9"/>
        <end position="244"/>
    </location>
</feature>
<feature type="binding site" evidence="1">
    <location>
        <position position="46"/>
    </location>
    <ligand>
        <name>ATP</name>
        <dbReference type="ChEBI" id="CHEBI:30616"/>
    </ligand>
</feature>
<feature type="binding site" evidence="1">
    <location>
        <begin position="53"/>
        <end position="55"/>
    </location>
    <ligand>
        <name>ATP</name>
        <dbReference type="ChEBI" id="CHEBI:30616"/>
    </ligand>
</feature>
<feature type="binding site" evidence="1">
    <location>
        <position position="99"/>
    </location>
    <ligand>
        <name>ATP</name>
        <dbReference type="ChEBI" id="CHEBI:30616"/>
    </ligand>
</feature>
<feature type="binding site" evidence="1">
    <location>
        <position position="102"/>
    </location>
    <ligand>
        <name>ATP</name>
        <dbReference type="ChEBI" id="CHEBI:30616"/>
    </ligand>
</feature>
<feature type="binding site" evidence="1">
    <location>
        <position position="107"/>
    </location>
    <ligand>
        <name>ATP</name>
        <dbReference type="ChEBI" id="CHEBI:30616"/>
    </ligand>
</feature>
<feature type="binding site" evidence="1">
    <location>
        <position position="199"/>
    </location>
    <ligand>
        <name>Mg(2+)</name>
        <dbReference type="ChEBI" id="CHEBI:18420"/>
    </ligand>
</feature>
<feature type="binding site" evidence="1">
    <location>
        <position position="213"/>
    </location>
    <ligand>
        <name>Mg(2+)</name>
        <dbReference type="ChEBI" id="CHEBI:18420"/>
    </ligand>
</feature>
<feature type="binding site" evidence="1">
    <location>
        <position position="264"/>
    </location>
    <ligand>
        <name>substrate</name>
        <note>ligand shared with subunit alpha</note>
    </ligand>
</feature>
<feature type="binding site" evidence="1">
    <location>
        <begin position="321"/>
        <end position="323"/>
    </location>
    <ligand>
        <name>substrate</name>
        <note>ligand shared with subunit alpha</note>
    </ligand>
</feature>
<comment type="function">
    <text evidence="1">Succinyl-CoA synthetase functions in the citric acid cycle (TCA), coupling the hydrolysis of succinyl-CoA to the synthesis of either ATP or GTP and thus represents the only step of substrate-level phosphorylation in the TCA. The beta subunit provides nucleotide specificity of the enzyme and binds the substrate succinate, while the binding sites for coenzyme A and phosphate are found in the alpha subunit.</text>
</comment>
<comment type="catalytic activity">
    <reaction evidence="1">
        <text>succinate + ATP + CoA = succinyl-CoA + ADP + phosphate</text>
        <dbReference type="Rhea" id="RHEA:17661"/>
        <dbReference type="ChEBI" id="CHEBI:30031"/>
        <dbReference type="ChEBI" id="CHEBI:30616"/>
        <dbReference type="ChEBI" id="CHEBI:43474"/>
        <dbReference type="ChEBI" id="CHEBI:57287"/>
        <dbReference type="ChEBI" id="CHEBI:57292"/>
        <dbReference type="ChEBI" id="CHEBI:456216"/>
        <dbReference type="EC" id="6.2.1.5"/>
    </reaction>
    <physiologicalReaction direction="right-to-left" evidence="1">
        <dbReference type="Rhea" id="RHEA:17663"/>
    </physiologicalReaction>
</comment>
<comment type="catalytic activity">
    <reaction evidence="1">
        <text>GTP + succinate + CoA = succinyl-CoA + GDP + phosphate</text>
        <dbReference type="Rhea" id="RHEA:22120"/>
        <dbReference type="ChEBI" id="CHEBI:30031"/>
        <dbReference type="ChEBI" id="CHEBI:37565"/>
        <dbReference type="ChEBI" id="CHEBI:43474"/>
        <dbReference type="ChEBI" id="CHEBI:57287"/>
        <dbReference type="ChEBI" id="CHEBI:57292"/>
        <dbReference type="ChEBI" id="CHEBI:58189"/>
    </reaction>
    <physiologicalReaction direction="right-to-left" evidence="1">
        <dbReference type="Rhea" id="RHEA:22122"/>
    </physiologicalReaction>
</comment>
<comment type="cofactor">
    <cofactor evidence="1">
        <name>Mg(2+)</name>
        <dbReference type="ChEBI" id="CHEBI:18420"/>
    </cofactor>
    <text evidence="1">Binds 1 Mg(2+) ion per subunit.</text>
</comment>
<comment type="pathway">
    <text evidence="1">Carbohydrate metabolism; tricarboxylic acid cycle; succinate from succinyl-CoA (ligase route): step 1/1.</text>
</comment>
<comment type="subunit">
    <text evidence="1">Heterotetramer of two alpha and two beta subunits.</text>
</comment>
<comment type="similarity">
    <text evidence="1">Belongs to the succinate/malate CoA ligase beta subunit family.</text>
</comment>
<dbReference type="EC" id="6.2.1.5" evidence="1"/>
<dbReference type="EMBL" id="CP000563">
    <property type="protein sequence ID" value="ABN62006.1"/>
    <property type="molecule type" value="Genomic_DNA"/>
</dbReference>
<dbReference type="RefSeq" id="WP_006081976.1">
    <property type="nucleotide sequence ID" value="NC_009052.1"/>
</dbReference>
<dbReference type="SMR" id="A3D5J3"/>
<dbReference type="STRING" id="325240.Sbal_2513"/>
<dbReference type="GeneID" id="11772717"/>
<dbReference type="KEGG" id="sbl:Sbal_2513"/>
<dbReference type="HOGENOM" id="CLU_037430_0_2_6"/>
<dbReference type="OrthoDB" id="9802602at2"/>
<dbReference type="UniPathway" id="UPA00223">
    <property type="reaction ID" value="UER00999"/>
</dbReference>
<dbReference type="Proteomes" id="UP000001557">
    <property type="component" value="Chromosome"/>
</dbReference>
<dbReference type="GO" id="GO:0005829">
    <property type="term" value="C:cytosol"/>
    <property type="evidence" value="ECO:0007669"/>
    <property type="project" value="TreeGrafter"/>
</dbReference>
<dbReference type="GO" id="GO:0042709">
    <property type="term" value="C:succinate-CoA ligase complex"/>
    <property type="evidence" value="ECO:0007669"/>
    <property type="project" value="TreeGrafter"/>
</dbReference>
<dbReference type="GO" id="GO:0005524">
    <property type="term" value="F:ATP binding"/>
    <property type="evidence" value="ECO:0007669"/>
    <property type="project" value="UniProtKB-UniRule"/>
</dbReference>
<dbReference type="GO" id="GO:0000287">
    <property type="term" value="F:magnesium ion binding"/>
    <property type="evidence" value="ECO:0007669"/>
    <property type="project" value="UniProtKB-UniRule"/>
</dbReference>
<dbReference type="GO" id="GO:0004775">
    <property type="term" value="F:succinate-CoA ligase (ADP-forming) activity"/>
    <property type="evidence" value="ECO:0007669"/>
    <property type="project" value="UniProtKB-UniRule"/>
</dbReference>
<dbReference type="GO" id="GO:0004776">
    <property type="term" value="F:succinate-CoA ligase (GDP-forming) activity"/>
    <property type="evidence" value="ECO:0007669"/>
    <property type="project" value="RHEA"/>
</dbReference>
<dbReference type="GO" id="GO:0006104">
    <property type="term" value="P:succinyl-CoA metabolic process"/>
    <property type="evidence" value="ECO:0007669"/>
    <property type="project" value="TreeGrafter"/>
</dbReference>
<dbReference type="GO" id="GO:0006099">
    <property type="term" value="P:tricarboxylic acid cycle"/>
    <property type="evidence" value="ECO:0007669"/>
    <property type="project" value="UniProtKB-UniRule"/>
</dbReference>
<dbReference type="FunFam" id="3.30.1490.20:FF:000002">
    <property type="entry name" value="Succinate--CoA ligase [ADP-forming] subunit beta"/>
    <property type="match status" value="1"/>
</dbReference>
<dbReference type="FunFam" id="3.30.470.20:FF:000002">
    <property type="entry name" value="Succinate--CoA ligase [ADP-forming] subunit beta"/>
    <property type="match status" value="1"/>
</dbReference>
<dbReference type="FunFam" id="3.40.50.261:FF:000001">
    <property type="entry name" value="Succinate--CoA ligase [ADP-forming] subunit beta"/>
    <property type="match status" value="1"/>
</dbReference>
<dbReference type="Gene3D" id="3.30.1490.20">
    <property type="entry name" value="ATP-grasp fold, A domain"/>
    <property type="match status" value="1"/>
</dbReference>
<dbReference type="Gene3D" id="3.30.470.20">
    <property type="entry name" value="ATP-grasp fold, B domain"/>
    <property type="match status" value="1"/>
</dbReference>
<dbReference type="Gene3D" id="3.40.50.261">
    <property type="entry name" value="Succinyl-CoA synthetase domains"/>
    <property type="match status" value="1"/>
</dbReference>
<dbReference type="HAMAP" id="MF_00558">
    <property type="entry name" value="Succ_CoA_beta"/>
    <property type="match status" value="1"/>
</dbReference>
<dbReference type="InterPro" id="IPR011761">
    <property type="entry name" value="ATP-grasp"/>
</dbReference>
<dbReference type="InterPro" id="IPR013650">
    <property type="entry name" value="ATP-grasp_succ-CoA_synth-type"/>
</dbReference>
<dbReference type="InterPro" id="IPR013815">
    <property type="entry name" value="ATP_grasp_subdomain_1"/>
</dbReference>
<dbReference type="InterPro" id="IPR017866">
    <property type="entry name" value="Succ-CoA_synthase_bsu_CS"/>
</dbReference>
<dbReference type="InterPro" id="IPR005811">
    <property type="entry name" value="SUCC_ACL_C"/>
</dbReference>
<dbReference type="InterPro" id="IPR005809">
    <property type="entry name" value="Succ_CoA_ligase-like_bsu"/>
</dbReference>
<dbReference type="InterPro" id="IPR016102">
    <property type="entry name" value="Succinyl-CoA_synth-like"/>
</dbReference>
<dbReference type="NCBIfam" id="NF001913">
    <property type="entry name" value="PRK00696.1"/>
    <property type="match status" value="1"/>
</dbReference>
<dbReference type="NCBIfam" id="TIGR01016">
    <property type="entry name" value="sucCoAbeta"/>
    <property type="match status" value="1"/>
</dbReference>
<dbReference type="PANTHER" id="PTHR11815:SF10">
    <property type="entry name" value="SUCCINATE--COA LIGASE [GDP-FORMING] SUBUNIT BETA, MITOCHONDRIAL"/>
    <property type="match status" value="1"/>
</dbReference>
<dbReference type="PANTHER" id="PTHR11815">
    <property type="entry name" value="SUCCINYL-COA SYNTHETASE BETA CHAIN"/>
    <property type="match status" value="1"/>
</dbReference>
<dbReference type="Pfam" id="PF08442">
    <property type="entry name" value="ATP-grasp_2"/>
    <property type="match status" value="1"/>
</dbReference>
<dbReference type="Pfam" id="PF00549">
    <property type="entry name" value="Ligase_CoA"/>
    <property type="match status" value="1"/>
</dbReference>
<dbReference type="PIRSF" id="PIRSF001554">
    <property type="entry name" value="SucCS_beta"/>
    <property type="match status" value="1"/>
</dbReference>
<dbReference type="SUPFAM" id="SSF56059">
    <property type="entry name" value="Glutathione synthetase ATP-binding domain-like"/>
    <property type="match status" value="1"/>
</dbReference>
<dbReference type="SUPFAM" id="SSF52210">
    <property type="entry name" value="Succinyl-CoA synthetase domains"/>
    <property type="match status" value="1"/>
</dbReference>
<dbReference type="PROSITE" id="PS50975">
    <property type="entry name" value="ATP_GRASP"/>
    <property type="match status" value="1"/>
</dbReference>
<dbReference type="PROSITE" id="PS01217">
    <property type="entry name" value="SUCCINYL_COA_LIG_3"/>
    <property type="match status" value="1"/>
</dbReference>
<name>SUCC_SHEB5</name>